<name>RS3_SALPA</name>
<proteinExistence type="inferred from homology"/>
<organism>
    <name type="scientific">Salmonella paratyphi A (strain ATCC 9150 / SARB42)</name>
    <dbReference type="NCBI Taxonomy" id="295319"/>
    <lineage>
        <taxon>Bacteria</taxon>
        <taxon>Pseudomonadati</taxon>
        <taxon>Pseudomonadota</taxon>
        <taxon>Gammaproteobacteria</taxon>
        <taxon>Enterobacterales</taxon>
        <taxon>Enterobacteriaceae</taxon>
        <taxon>Salmonella</taxon>
    </lineage>
</organism>
<comment type="function">
    <text evidence="2">Binds the lower part of the 30S subunit head. Binds mRNA in the 70S ribosome, positioning it for translation.</text>
</comment>
<comment type="subunit">
    <text evidence="2">Part of the 30S ribosomal subunit. Forms a tight complex with proteins S10 and S14.</text>
</comment>
<comment type="similarity">
    <text evidence="2">Belongs to the universal ribosomal protein uS3 family.</text>
</comment>
<dbReference type="EMBL" id="CP000026">
    <property type="protein sequence ID" value="AAV79116.1"/>
    <property type="molecule type" value="Genomic_DNA"/>
</dbReference>
<dbReference type="RefSeq" id="WP_000529945.1">
    <property type="nucleotide sequence ID" value="NC_006511.1"/>
</dbReference>
<dbReference type="SMR" id="Q5PIV8"/>
<dbReference type="GeneID" id="97603663"/>
<dbReference type="KEGG" id="spt:SPA3300"/>
<dbReference type="HOGENOM" id="CLU_058591_0_2_6"/>
<dbReference type="Proteomes" id="UP000008185">
    <property type="component" value="Chromosome"/>
</dbReference>
<dbReference type="GO" id="GO:0022627">
    <property type="term" value="C:cytosolic small ribosomal subunit"/>
    <property type="evidence" value="ECO:0007669"/>
    <property type="project" value="TreeGrafter"/>
</dbReference>
<dbReference type="GO" id="GO:0003729">
    <property type="term" value="F:mRNA binding"/>
    <property type="evidence" value="ECO:0007669"/>
    <property type="project" value="UniProtKB-UniRule"/>
</dbReference>
<dbReference type="GO" id="GO:0019843">
    <property type="term" value="F:rRNA binding"/>
    <property type="evidence" value="ECO:0007669"/>
    <property type="project" value="UniProtKB-UniRule"/>
</dbReference>
<dbReference type="GO" id="GO:0003735">
    <property type="term" value="F:structural constituent of ribosome"/>
    <property type="evidence" value="ECO:0007669"/>
    <property type="project" value="InterPro"/>
</dbReference>
<dbReference type="GO" id="GO:0006412">
    <property type="term" value="P:translation"/>
    <property type="evidence" value="ECO:0007669"/>
    <property type="project" value="UniProtKB-UniRule"/>
</dbReference>
<dbReference type="CDD" id="cd02412">
    <property type="entry name" value="KH-II_30S_S3"/>
    <property type="match status" value="1"/>
</dbReference>
<dbReference type="FunFam" id="3.30.1140.32:FF:000001">
    <property type="entry name" value="30S ribosomal protein S3"/>
    <property type="match status" value="1"/>
</dbReference>
<dbReference type="FunFam" id="3.30.300.20:FF:000001">
    <property type="entry name" value="30S ribosomal protein S3"/>
    <property type="match status" value="1"/>
</dbReference>
<dbReference type="Gene3D" id="3.30.300.20">
    <property type="match status" value="1"/>
</dbReference>
<dbReference type="Gene3D" id="3.30.1140.32">
    <property type="entry name" value="Ribosomal protein S3, C-terminal domain"/>
    <property type="match status" value="1"/>
</dbReference>
<dbReference type="HAMAP" id="MF_01309_B">
    <property type="entry name" value="Ribosomal_uS3_B"/>
    <property type="match status" value="1"/>
</dbReference>
<dbReference type="InterPro" id="IPR004087">
    <property type="entry name" value="KH_dom"/>
</dbReference>
<dbReference type="InterPro" id="IPR015946">
    <property type="entry name" value="KH_dom-like_a/b"/>
</dbReference>
<dbReference type="InterPro" id="IPR004044">
    <property type="entry name" value="KH_dom_type_2"/>
</dbReference>
<dbReference type="InterPro" id="IPR009019">
    <property type="entry name" value="KH_sf_prok-type"/>
</dbReference>
<dbReference type="InterPro" id="IPR036419">
    <property type="entry name" value="Ribosomal_S3_C_sf"/>
</dbReference>
<dbReference type="InterPro" id="IPR005704">
    <property type="entry name" value="Ribosomal_uS3_bac-typ"/>
</dbReference>
<dbReference type="InterPro" id="IPR001351">
    <property type="entry name" value="Ribosomal_uS3_C"/>
</dbReference>
<dbReference type="InterPro" id="IPR018280">
    <property type="entry name" value="Ribosomal_uS3_CS"/>
</dbReference>
<dbReference type="NCBIfam" id="TIGR01009">
    <property type="entry name" value="rpsC_bact"/>
    <property type="match status" value="1"/>
</dbReference>
<dbReference type="PANTHER" id="PTHR11760">
    <property type="entry name" value="30S/40S RIBOSOMAL PROTEIN S3"/>
    <property type="match status" value="1"/>
</dbReference>
<dbReference type="PANTHER" id="PTHR11760:SF19">
    <property type="entry name" value="SMALL RIBOSOMAL SUBUNIT PROTEIN US3C"/>
    <property type="match status" value="1"/>
</dbReference>
<dbReference type="Pfam" id="PF07650">
    <property type="entry name" value="KH_2"/>
    <property type="match status" value="1"/>
</dbReference>
<dbReference type="Pfam" id="PF00189">
    <property type="entry name" value="Ribosomal_S3_C"/>
    <property type="match status" value="1"/>
</dbReference>
<dbReference type="SMART" id="SM00322">
    <property type="entry name" value="KH"/>
    <property type="match status" value="1"/>
</dbReference>
<dbReference type="SUPFAM" id="SSF54814">
    <property type="entry name" value="Prokaryotic type KH domain (KH-domain type II)"/>
    <property type="match status" value="1"/>
</dbReference>
<dbReference type="SUPFAM" id="SSF54821">
    <property type="entry name" value="Ribosomal protein S3 C-terminal domain"/>
    <property type="match status" value="1"/>
</dbReference>
<dbReference type="PROSITE" id="PS50823">
    <property type="entry name" value="KH_TYPE_2"/>
    <property type="match status" value="1"/>
</dbReference>
<dbReference type="PROSITE" id="PS00548">
    <property type="entry name" value="RIBOSOMAL_S3"/>
    <property type="match status" value="1"/>
</dbReference>
<reference key="1">
    <citation type="journal article" date="2004" name="Nat. Genet.">
        <title>Comparison of genome degradation in Paratyphi A and Typhi, human-restricted serovars of Salmonella enterica that cause typhoid.</title>
        <authorList>
            <person name="McClelland M."/>
            <person name="Sanderson K.E."/>
            <person name="Clifton S.W."/>
            <person name="Latreille P."/>
            <person name="Porwollik S."/>
            <person name="Sabo A."/>
            <person name="Meyer R."/>
            <person name="Bieri T."/>
            <person name="Ozersky P."/>
            <person name="McLellan M."/>
            <person name="Harkins C.R."/>
            <person name="Wang C."/>
            <person name="Nguyen C."/>
            <person name="Berghoff A."/>
            <person name="Elliott G."/>
            <person name="Kohlberg S."/>
            <person name="Strong C."/>
            <person name="Du F."/>
            <person name="Carter J."/>
            <person name="Kremizki C."/>
            <person name="Layman D."/>
            <person name="Leonard S."/>
            <person name="Sun H."/>
            <person name="Fulton L."/>
            <person name="Nash W."/>
            <person name="Miner T."/>
            <person name="Minx P."/>
            <person name="Delehaunty K."/>
            <person name="Fronick C."/>
            <person name="Magrini V."/>
            <person name="Nhan M."/>
            <person name="Warren W."/>
            <person name="Florea L."/>
            <person name="Spieth J."/>
            <person name="Wilson R.K."/>
        </authorList>
    </citation>
    <scope>NUCLEOTIDE SEQUENCE [LARGE SCALE GENOMIC DNA]</scope>
    <source>
        <strain>ATCC 9150 / SARB42</strain>
    </source>
</reference>
<sequence>MGQKVHPNGIRLGIVKPWNSTWFANTKEFADNLDSDFKVRQYLTKELAKASVSRIVIERPAKSIRVTIHTARPGIVIGKKGEDVEKLRKVVADIAGVPAQINIAEVRKPELDAKLVADSITSQLERRVMFRRAMKRAVQNAMRLGAKGIKVEVSGRLGGAEIARTEWYREGRVPLHTLRADIDYNTSEAHTTYGVIGVKVWIFKGEILGGMAAVEQPEKPAAQPKKQQRKGRK</sequence>
<evidence type="ECO:0000250" key="1"/>
<evidence type="ECO:0000255" key="2">
    <source>
        <dbReference type="HAMAP-Rule" id="MF_01309"/>
    </source>
</evidence>
<evidence type="ECO:0000305" key="3"/>
<keyword id="KW-0687">Ribonucleoprotein</keyword>
<keyword id="KW-0689">Ribosomal protein</keyword>
<keyword id="KW-0694">RNA-binding</keyword>
<keyword id="KW-0699">rRNA-binding</keyword>
<gene>
    <name evidence="2" type="primary">rpsC</name>
    <name type="ordered locus">SPA3300</name>
</gene>
<protein>
    <recommendedName>
        <fullName evidence="2">Small ribosomal subunit protein uS3</fullName>
    </recommendedName>
    <alternativeName>
        <fullName evidence="3">30S ribosomal protein S3</fullName>
    </alternativeName>
</protein>
<feature type="initiator methionine" description="Removed" evidence="1">
    <location>
        <position position="1"/>
    </location>
</feature>
<feature type="chain" id="PRO_0000130190" description="Small ribosomal subunit protein uS3">
    <location>
        <begin position="2"/>
        <end position="233"/>
    </location>
</feature>
<feature type="domain" description="KH type-2" evidence="2">
    <location>
        <begin position="39"/>
        <end position="107"/>
    </location>
</feature>
<accession>Q5PIV8</accession>